<feature type="chain" id="PRO_0000209203" description="Protein SlyX homolog">
    <location>
        <begin position="1"/>
        <end position="73"/>
    </location>
</feature>
<dbReference type="EMBL" id="L42023">
    <property type="protein sequence ID" value="AAC22231.1"/>
    <property type="molecule type" value="Genomic_DNA"/>
</dbReference>
<dbReference type="PIR" id="D64078">
    <property type="entry name" value="D64078"/>
</dbReference>
<dbReference type="RefSeq" id="NP_438730.1">
    <property type="nucleotide sequence ID" value="NC_000907.1"/>
</dbReference>
<dbReference type="SMR" id="P44759"/>
<dbReference type="STRING" id="71421.HI_0573"/>
<dbReference type="EnsemblBacteria" id="AAC22231">
    <property type="protein sequence ID" value="AAC22231"/>
    <property type="gene ID" value="HI_0573"/>
</dbReference>
<dbReference type="KEGG" id="hin:HI_0573"/>
<dbReference type="PATRIC" id="fig|71421.8.peg.593"/>
<dbReference type="eggNOG" id="COG2900">
    <property type="taxonomic scope" value="Bacteria"/>
</dbReference>
<dbReference type="HOGENOM" id="CLU_180796_4_0_6"/>
<dbReference type="OrthoDB" id="5771733at2"/>
<dbReference type="PhylomeDB" id="P44759"/>
<dbReference type="BioCyc" id="HINF71421:G1GJ1-585-MONOMER"/>
<dbReference type="Proteomes" id="UP000000579">
    <property type="component" value="Chromosome"/>
</dbReference>
<dbReference type="Gene3D" id="1.20.5.300">
    <property type="match status" value="1"/>
</dbReference>
<dbReference type="HAMAP" id="MF_00715">
    <property type="entry name" value="SlyX"/>
    <property type="match status" value="1"/>
</dbReference>
<dbReference type="InterPro" id="IPR007236">
    <property type="entry name" value="SlyX"/>
</dbReference>
<dbReference type="NCBIfam" id="NF002556">
    <property type="entry name" value="PRK02119.1"/>
    <property type="match status" value="1"/>
</dbReference>
<dbReference type="PANTHER" id="PTHR36508">
    <property type="entry name" value="PROTEIN SLYX"/>
    <property type="match status" value="1"/>
</dbReference>
<dbReference type="PANTHER" id="PTHR36508:SF1">
    <property type="entry name" value="PROTEIN SLYX"/>
    <property type="match status" value="1"/>
</dbReference>
<dbReference type="Pfam" id="PF04102">
    <property type="entry name" value="SlyX"/>
    <property type="match status" value="1"/>
</dbReference>
<proteinExistence type="inferred from homology"/>
<protein>
    <recommendedName>
        <fullName>Protein SlyX homolog</fullName>
    </recommendedName>
</protein>
<organism>
    <name type="scientific">Haemophilus influenzae (strain ATCC 51907 / DSM 11121 / KW20 / Rd)</name>
    <dbReference type="NCBI Taxonomy" id="71421"/>
    <lineage>
        <taxon>Bacteria</taxon>
        <taxon>Pseudomonadati</taxon>
        <taxon>Pseudomonadota</taxon>
        <taxon>Gammaproteobacteria</taxon>
        <taxon>Pasteurellales</taxon>
        <taxon>Pasteurellaceae</taxon>
        <taxon>Haemophilus</taxon>
    </lineage>
</organism>
<reference key="1">
    <citation type="journal article" date="1995" name="Science">
        <title>Whole-genome random sequencing and assembly of Haemophilus influenzae Rd.</title>
        <authorList>
            <person name="Fleischmann R.D."/>
            <person name="Adams M.D."/>
            <person name="White O."/>
            <person name="Clayton R.A."/>
            <person name="Kirkness E.F."/>
            <person name="Kerlavage A.R."/>
            <person name="Bult C.J."/>
            <person name="Tomb J.-F."/>
            <person name="Dougherty B.A."/>
            <person name="Merrick J.M."/>
            <person name="McKenney K."/>
            <person name="Sutton G.G."/>
            <person name="FitzHugh W."/>
            <person name="Fields C.A."/>
            <person name="Gocayne J.D."/>
            <person name="Scott J.D."/>
            <person name="Shirley R."/>
            <person name="Liu L.-I."/>
            <person name="Glodek A."/>
            <person name="Kelley J.M."/>
            <person name="Weidman J.F."/>
            <person name="Phillips C.A."/>
            <person name="Spriggs T."/>
            <person name="Hedblom E."/>
            <person name="Cotton M.D."/>
            <person name="Utterback T.R."/>
            <person name="Hanna M.C."/>
            <person name="Nguyen D.T."/>
            <person name="Saudek D.M."/>
            <person name="Brandon R.C."/>
            <person name="Fine L.D."/>
            <person name="Fritchman J.L."/>
            <person name="Fuhrmann J.L."/>
            <person name="Geoghagen N.S.M."/>
            <person name="Gnehm C.L."/>
            <person name="McDonald L.A."/>
            <person name="Small K.V."/>
            <person name="Fraser C.M."/>
            <person name="Smith H.O."/>
            <person name="Venter J.C."/>
        </authorList>
    </citation>
    <scope>NUCLEOTIDE SEQUENCE [LARGE SCALE GENOMIC DNA]</scope>
    <source>
        <strain>ATCC 51907 / DSM 11121 / KW20 / Rd</strain>
    </source>
</reference>
<gene>
    <name type="primary">slyX</name>
    <name type="ordered locus">HI_0573</name>
</gene>
<keyword id="KW-1185">Reference proteome</keyword>
<accession>P44759</accession>
<sequence length="73" mass="8723">MQIQQMLENRIEELEMKIAFQEQLLDELNHALVQQQFDIDKMQVQLRYMANKLKDFQSSNIASQSEETPPPHY</sequence>
<name>SLYX_HAEIN</name>
<evidence type="ECO:0000305" key="1"/>
<comment type="similarity">
    <text evidence="1">Belongs to the SlyX family.</text>
</comment>